<dbReference type="EC" id="4.2.1.10" evidence="1"/>
<dbReference type="EMBL" id="CP000158">
    <property type="protein sequence ID" value="ABI76199.1"/>
    <property type="molecule type" value="Genomic_DNA"/>
</dbReference>
<dbReference type="RefSeq" id="WP_011647241.1">
    <property type="nucleotide sequence ID" value="NC_008358.1"/>
</dbReference>
<dbReference type="SMR" id="Q0C000"/>
<dbReference type="STRING" id="228405.HNE_2248"/>
<dbReference type="KEGG" id="hne:HNE_2248"/>
<dbReference type="eggNOG" id="COG0757">
    <property type="taxonomic scope" value="Bacteria"/>
</dbReference>
<dbReference type="HOGENOM" id="CLU_090968_2_1_5"/>
<dbReference type="UniPathway" id="UPA00053">
    <property type="reaction ID" value="UER00086"/>
</dbReference>
<dbReference type="Proteomes" id="UP000001959">
    <property type="component" value="Chromosome"/>
</dbReference>
<dbReference type="GO" id="GO:0003855">
    <property type="term" value="F:3-dehydroquinate dehydratase activity"/>
    <property type="evidence" value="ECO:0007669"/>
    <property type="project" value="UniProtKB-UniRule"/>
</dbReference>
<dbReference type="GO" id="GO:0008652">
    <property type="term" value="P:amino acid biosynthetic process"/>
    <property type="evidence" value="ECO:0007669"/>
    <property type="project" value="UniProtKB-KW"/>
</dbReference>
<dbReference type="GO" id="GO:0009073">
    <property type="term" value="P:aromatic amino acid family biosynthetic process"/>
    <property type="evidence" value="ECO:0007669"/>
    <property type="project" value="UniProtKB-KW"/>
</dbReference>
<dbReference type="GO" id="GO:0009423">
    <property type="term" value="P:chorismate biosynthetic process"/>
    <property type="evidence" value="ECO:0007669"/>
    <property type="project" value="UniProtKB-UniRule"/>
</dbReference>
<dbReference type="GO" id="GO:0019631">
    <property type="term" value="P:quinate catabolic process"/>
    <property type="evidence" value="ECO:0007669"/>
    <property type="project" value="TreeGrafter"/>
</dbReference>
<dbReference type="CDD" id="cd00466">
    <property type="entry name" value="DHQase_II"/>
    <property type="match status" value="1"/>
</dbReference>
<dbReference type="Gene3D" id="3.40.50.9100">
    <property type="entry name" value="Dehydroquinase, class II"/>
    <property type="match status" value="1"/>
</dbReference>
<dbReference type="HAMAP" id="MF_00169">
    <property type="entry name" value="AroQ"/>
    <property type="match status" value="1"/>
</dbReference>
<dbReference type="InterPro" id="IPR001874">
    <property type="entry name" value="DHquinase_II"/>
</dbReference>
<dbReference type="InterPro" id="IPR036441">
    <property type="entry name" value="DHquinase_II_sf"/>
</dbReference>
<dbReference type="NCBIfam" id="TIGR01088">
    <property type="entry name" value="aroQ"/>
    <property type="match status" value="1"/>
</dbReference>
<dbReference type="NCBIfam" id="NF003805">
    <property type="entry name" value="PRK05395.1-2"/>
    <property type="match status" value="1"/>
</dbReference>
<dbReference type="NCBIfam" id="NF003806">
    <property type="entry name" value="PRK05395.1-3"/>
    <property type="match status" value="1"/>
</dbReference>
<dbReference type="NCBIfam" id="NF003807">
    <property type="entry name" value="PRK05395.1-4"/>
    <property type="match status" value="1"/>
</dbReference>
<dbReference type="PANTHER" id="PTHR21272">
    <property type="entry name" value="CATABOLIC 3-DEHYDROQUINASE"/>
    <property type="match status" value="1"/>
</dbReference>
<dbReference type="PANTHER" id="PTHR21272:SF3">
    <property type="entry name" value="CATABOLIC 3-DEHYDROQUINASE"/>
    <property type="match status" value="1"/>
</dbReference>
<dbReference type="Pfam" id="PF01220">
    <property type="entry name" value="DHquinase_II"/>
    <property type="match status" value="1"/>
</dbReference>
<dbReference type="PIRSF" id="PIRSF001399">
    <property type="entry name" value="DHquinase_II"/>
    <property type="match status" value="1"/>
</dbReference>
<dbReference type="SUPFAM" id="SSF52304">
    <property type="entry name" value="Type II 3-dehydroquinate dehydratase"/>
    <property type="match status" value="1"/>
</dbReference>
<protein>
    <recommendedName>
        <fullName evidence="1">3-dehydroquinate dehydratase</fullName>
        <shortName evidence="1">3-dehydroquinase</shortName>
        <ecNumber evidence="1">4.2.1.10</ecNumber>
    </recommendedName>
    <alternativeName>
        <fullName evidence="1">Type II DHQase</fullName>
    </alternativeName>
</protein>
<organism>
    <name type="scientific">Hyphomonas neptunium (strain ATCC 15444)</name>
    <dbReference type="NCBI Taxonomy" id="228405"/>
    <lineage>
        <taxon>Bacteria</taxon>
        <taxon>Pseudomonadati</taxon>
        <taxon>Pseudomonadota</taxon>
        <taxon>Alphaproteobacteria</taxon>
        <taxon>Hyphomonadales</taxon>
        <taxon>Hyphomonadaceae</taxon>
        <taxon>Hyphomonas</taxon>
    </lineage>
</organism>
<proteinExistence type="inferred from homology"/>
<gene>
    <name evidence="1" type="primary">aroQ</name>
    <name type="ordered locus">HNE_2248</name>
</gene>
<feature type="chain" id="PRO_1000023477" description="3-dehydroquinate dehydratase">
    <location>
        <begin position="1"/>
        <end position="147"/>
    </location>
</feature>
<feature type="active site" description="Proton acceptor" evidence="1">
    <location>
        <position position="24"/>
    </location>
</feature>
<feature type="active site" description="Proton donor" evidence="1">
    <location>
        <position position="99"/>
    </location>
</feature>
<feature type="binding site" evidence="1">
    <location>
        <position position="73"/>
    </location>
    <ligand>
        <name>substrate</name>
    </ligand>
</feature>
<feature type="binding site" evidence="1">
    <location>
        <position position="79"/>
    </location>
    <ligand>
        <name>substrate</name>
    </ligand>
</feature>
<feature type="binding site" evidence="1">
    <location>
        <position position="86"/>
    </location>
    <ligand>
        <name>substrate</name>
    </ligand>
</feature>
<feature type="binding site" evidence="1">
    <location>
        <begin position="100"/>
        <end position="101"/>
    </location>
    <ligand>
        <name>substrate</name>
    </ligand>
</feature>
<feature type="binding site" evidence="1">
    <location>
        <position position="110"/>
    </location>
    <ligand>
        <name>substrate</name>
    </ligand>
</feature>
<feature type="site" description="Transition state stabilizer" evidence="1">
    <location>
        <position position="19"/>
    </location>
</feature>
<reference key="1">
    <citation type="journal article" date="2006" name="J. Bacteriol.">
        <title>Comparative genomic evidence for a close relationship between the dimorphic prosthecate bacteria Hyphomonas neptunium and Caulobacter crescentus.</title>
        <authorList>
            <person name="Badger J.H."/>
            <person name="Hoover T.R."/>
            <person name="Brun Y.V."/>
            <person name="Weiner R.M."/>
            <person name="Laub M.T."/>
            <person name="Alexandre G."/>
            <person name="Mrazek J."/>
            <person name="Ren Q."/>
            <person name="Paulsen I.T."/>
            <person name="Nelson K.E."/>
            <person name="Khouri H.M."/>
            <person name="Radune D."/>
            <person name="Sosa J."/>
            <person name="Dodson R.J."/>
            <person name="Sullivan S.A."/>
            <person name="Rosovitz M.J."/>
            <person name="Madupu R."/>
            <person name="Brinkac L.M."/>
            <person name="Durkin A.S."/>
            <person name="Daugherty S.C."/>
            <person name="Kothari S.P."/>
            <person name="Giglio M.G."/>
            <person name="Zhou L."/>
            <person name="Haft D.H."/>
            <person name="Selengut J.D."/>
            <person name="Davidsen T.M."/>
            <person name="Yang Q."/>
            <person name="Zafar N."/>
            <person name="Ward N.L."/>
        </authorList>
    </citation>
    <scope>NUCLEOTIDE SEQUENCE [LARGE SCALE GENOMIC DNA]</scope>
    <source>
        <strain>ATCC 15444</strain>
    </source>
</reference>
<sequence>MSKPVYVLGGPNLNLLGTREPEIYGRDTLEDIHARLRALAGDVAIVARQTNSEGELVSWVQEAARDGRALILNAAAYTHTSIALHDALKTLKIPLIEVHLSNPAAREAFRHVNYVAPVAVGTIAGLGAYGYELALSAALRLSGEARS</sequence>
<evidence type="ECO:0000255" key="1">
    <source>
        <dbReference type="HAMAP-Rule" id="MF_00169"/>
    </source>
</evidence>
<keyword id="KW-0028">Amino-acid biosynthesis</keyword>
<keyword id="KW-0057">Aromatic amino acid biosynthesis</keyword>
<keyword id="KW-0456">Lyase</keyword>
<keyword id="KW-1185">Reference proteome</keyword>
<name>AROQ_HYPNA</name>
<comment type="function">
    <text evidence="1">Catalyzes a trans-dehydration via an enolate intermediate.</text>
</comment>
<comment type="catalytic activity">
    <reaction evidence="1">
        <text>3-dehydroquinate = 3-dehydroshikimate + H2O</text>
        <dbReference type="Rhea" id="RHEA:21096"/>
        <dbReference type="ChEBI" id="CHEBI:15377"/>
        <dbReference type="ChEBI" id="CHEBI:16630"/>
        <dbReference type="ChEBI" id="CHEBI:32364"/>
        <dbReference type="EC" id="4.2.1.10"/>
    </reaction>
</comment>
<comment type="pathway">
    <text evidence="1">Metabolic intermediate biosynthesis; chorismate biosynthesis; chorismate from D-erythrose 4-phosphate and phosphoenolpyruvate: step 3/7.</text>
</comment>
<comment type="subunit">
    <text evidence="1">Homododecamer.</text>
</comment>
<comment type="similarity">
    <text evidence="1">Belongs to the type-II 3-dehydroquinase family.</text>
</comment>
<accession>Q0C000</accession>